<sequence>MSSDDAIIIRCPFDCEFAGDSISFISHLTTIHNSSVQTLAKNAYLCASEIANELNQNPNLKDQEILLLQIAQENSLKRVLRQQQKERREGKIKSLQCLFCNNEGLLNRQEWFEHSFHVHGLNIGLADNIVYINRLLEKIKNELESFRCLCCHVPCKNKKLLREHMNNKRHFRLDPKSSEYDEFYIINYASVTKSITISHSQFAINEDINETDDTISDINDEDAEPLSVECIFCTNFYEPVFCFEHCKIVHDWDIKKIQKDYSLDVYGAIRVINYSRKTKKKSIPAETDSFWKEPGWLIPVVPDDALIICLSEVIEDPRL</sequence>
<name>YLM7_SCHPO</name>
<proteinExistence type="inferred from homology"/>
<dbReference type="EMBL" id="CU329670">
    <property type="protein sequence ID" value="CAC00555.1"/>
    <property type="molecule type" value="Genomic_DNA"/>
</dbReference>
<dbReference type="RefSeq" id="NP_594770.1">
    <property type="nucleotide sequence ID" value="NM_001020197.2"/>
</dbReference>
<dbReference type="SMR" id="Q9P374"/>
<dbReference type="BioGRID" id="278875">
    <property type="interactions" value="3"/>
</dbReference>
<dbReference type="FunCoup" id="Q9P374">
    <property type="interactions" value="2"/>
</dbReference>
<dbReference type="STRING" id="284812.Q9P374"/>
<dbReference type="PaxDb" id="4896-SPAC19B12.07c.1"/>
<dbReference type="EnsemblFungi" id="SPAC19B12.07c.1">
    <property type="protein sequence ID" value="SPAC19B12.07c.1:pep"/>
    <property type="gene ID" value="SPAC19B12.07c"/>
</dbReference>
<dbReference type="KEGG" id="spo:2542411"/>
<dbReference type="PomBase" id="SPAC19B12.07c"/>
<dbReference type="VEuPathDB" id="FungiDB:SPAC19B12.07c"/>
<dbReference type="eggNOG" id="KOG2482">
    <property type="taxonomic scope" value="Eukaryota"/>
</dbReference>
<dbReference type="HOGENOM" id="CLU_880434_0_0_1"/>
<dbReference type="InParanoid" id="Q9P374"/>
<dbReference type="OMA" id="CASEIAN"/>
<dbReference type="PhylomeDB" id="Q9P374"/>
<dbReference type="PRO" id="PR:Q9P374"/>
<dbReference type="Proteomes" id="UP000002485">
    <property type="component" value="Chromosome I"/>
</dbReference>
<dbReference type="GO" id="GO:0005829">
    <property type="term" value="C:cytosol"/>
    <property type="evidence" value="ECO:0007005"/>
    <property type="project" value="PomBase"/>
</dbReference>
<dbReference type="GO" id="GO:0005634">
    <property type="term" value="C:nucleus"/>
    <property type="evidence" value="ECO:0007005"/>
    <property type="project" value="PomBase"/>
</dbReference>
<dbReference type="GO" id="GO:0008270">
    <property type="term" value="F:zinc ion binding"/>
    <property type="evidence" value="ECO:0007669"/>
    <property type="project" value="UniProtKB-KW"/>
</dbReference>
<dbReference type="InterPro" id="IPR041661">
    <property type="entry name" value="ZN622/Rei1/Reh1_Znf-C2H2"/>
</dbReference>
<dbReference type="InterPro" id="IPR040048">
    <property type="entry name" value="ZNF277"/>
</dbReference>
<dbReference type="InterPro" id="IPR036236">
    <property type="entry name" value="Znf_C2H2_sf"/>
</dbReference>
<dbReference type="InterPro" id="IPR013087">
    <property type="entry name" value="Znf_C2H2_type"/>
</dbReference>
<dbReference type="PANTHER" id="PTHR13267">
    <property type="entry name" value="ZINC FINGER PROTEIN 277"/>
    <property type="match status" value="1"/>
</dbReference>
<dbReference type="PANTHER" id="PTHR13267:SF3">
    <property type="entry name" value="ZINC FINGER PROTEIN 277"/>
    <property type="match status" value="1"/>
</dbReference>
<dbReference type="Pfam" id="PF12756">
    <property type="entry name" value="zf-C2H2_2"/>
    <property type="match status" value="1"/>
</dbReference>
<dbReference type="SUPFAM" id="SSF57667">
    <property type="entry name" value="beta-beta-alpha zinc fingers"/>
    <property type="match status" value="2"/>
</dbReference>
<dbReference type="PROSITE" id="PS00028">
    <property type="entry name" value="ZINC_FINGER_C2H2_1"/>
    <property type="match status" value="1"/>
</dbReference>
<feature type="chain" id="PRO_0000351139" description="Zinc finger protein C19B12.07c">
    <location>
        <begin position="1"/>
        <end position="319"/>
    </location>
</feature>
<feature type="zinc finger region" description="C2H2-type" evidence="1">
    <location>
        <begin position="146"/>
        <end position="170"/>
    </location>
</feature>
<keyword id="KW-0479">Metal-binding</keyword>
<keyword id="KW-0539">Nucleus</keyword>
<keyword id="KW-1185">Reference proteome</keyword>
<keyword id="KW-0862">Zinc</keyword>
<keyword id="KW-0863">Zinc-finger</keyword>
<accession>Q9P374</accession>
<organism>
    <name type="scientific">Schizosaccharomyces pombe (strain 972 / ATCC 24843)</name>
    <name type="common">Fission yeast</name>
    <dbReference type="NCBI Taxonomy" id="284812"/>
    <lineage>
        <taxon>Eukaryota</taxon>
        <taxon>Fungi</taxon>
        <taxon>Dikarya</taxon>
        <taxon>Ascomycota</taxon>
        <taxon>Taphrinomycotina</taxon>
        <taxon>Schizosaccharomycetes</taxon>
        <taxon>Schizosaccharomycetales</taxon>
        <taxon>Schizosaccharomycetaceae</taxon>
        <taxon>Schizosaccharomyces</taxon>
    </lineage>
</organism>
<protein>
    <recommendedName>
        <fullName>Zinc finger protein C19B12.07c</fullName>
    </recommendedName>
</protein>
<comment type="subcellular location">
    <subcellularLocation>
        <location evidence="2">Nucleus</location>
    </subcellularLocation>
</comment>
<comment type="similarity">
    <text evidence="3">Belongs to the ZNF277 family.</text>
</comment>
<gene>
    <name type="ORF">SPAC19B12.07c</name>
</gene>
<evidence type="ECO:0000255" key="1"/>
<evidence type="ECO:0000269" key="2">
    <source>
    </source>
</evidence>
<evidence type="ECO:0000305" key="3"/>
<evidence type="ECO:0000312" key="4">
    <source>
        <dbReference type="EMBL" id="CAC00555.1"/>
    </source>
</evidence>
<reference evidence="4" key="1">
    <citation type="journal article" date="2002" name="Nature">
        <title>The genome sequence of Schizosaccharomyces pombe.</title>
        <authorList>
            <person name="Wood V."/>
            <person name="Gwilliam R."/>
            <person name="Rajandream M.A."/>
            <person name="Lyne M.H."/>
            <person name="Lyne R."/>
            <person name="Stewart A."/>
            <person name="Sgouros J.G."/>
            <person name="Peat N."/>
            <person name="Hayles J."/>
            <person name="Baker S.G."/>
            <person name="Basham D."/>
            <person name="Bowman S."/>
            <person name="Brooks K."/>
            <person name="Brown D."/>
            <person name="Brown S."/>
            <person name="Chillingworth T."/>
            <person name="Churcher C.M."/>
            <person name="Collins M."/>
            <person name="Connor R."/>
            <person name="Cronin A."/>
            <person name="Davis P."/>
            <person name="Feltwell T."/>
            <person name="Fraser A."/>
            <person name="Gentles S."/>
            <person name="Goble A."/>
            <person name="Hamlin N."/>
            <person name="Harris D.E."/>
            <person name="Hidalgo J."/>
            <person name="Hodgson G."/>
            <person name="Holroyd S."/>
            <person name="Hornsby T."/>
            <person name="Howarth S."/>
            <person name="Huckle E.J."/>
            <person name="Hunt S."/>
            <person name="Jagels K."/>
            <person name="James K.D."/>
            <person name="Jones L."/>
            <person name="Jones M."/>
            <person name="Leather S."/>
            <person name="McDonald S."/>
            <person name="McLean J."/>
            <person name="Mooney P."/>
            <person name="Moule S."/>
            <person name="Mungall K.L."/>
            <person name="Murphy L.D."/>
            <person name="Niblett D."/>
            <person name="Odell C."/>
            <person name="Oliver K."/>
            <person name="O'Neil S."/>
            <person name="Pearson D."/>
            <person name="Quail M.A."/>
            <person name="Rabbinowitsch E."/>
            <person name="Rutherford K.M."/>
            <person name="Rutter S."/>
            <person name="Saunders D."/>
            <person name="Seeger K."/>
            <person name="Sharp S."/>
            <person name="Skelton J."/>
            <person name="Simmonds M.N."/>
            <person name="Squares R."/>
            <person name="Squares S."/>
            <person name="Stevens K."/>
            <person name="Taylor K."/>
            <person name="Taylor R.G."/>
            <person name="Tivey A."/>
            <person name="Walsh S.V."/>
            <person name="Warren T."/>
            <person name="Whitehead S."/>
            <person name="Woodward J.R."/>
            <person name="Volckaert G."/>
            <person name="Aert R."/>
            <person name="Robben J."/>
            <person name="Grymonprez B."/>
            <person name="Weltjens I."/>
            <person name="Vanstreels E."/>
            <person name="Rieger M."/>
            <person name="Schaefer M."/>
            <person name="Mueller-Auer S."/>
            <person name="Gabel C."/>
            <person name="Fuchs M."/>
            <person name="Duesterhoeft A."/>
            <person name="Fritzc C."/>
            <person name="Holzer E."/>
            <person name="Moestl D."/>
            <person name="Hilbert H."/>
            <person name="Borzym K."/>
            <person name="Langer I."/>
            <person name="Beck A."/>
            <person name="Lehrach H."/>
            <person name="Reinhardt R."/>
            <person name="Pohl T.M."/>
            <person name="Eger P."/>
            <person name="Zimmermann W."/>
            <person name="Wedler H."/>
            <person name="Wambutt R."/>
            <person name="Purnelle B."/>
            <person name="Goffeau A."/>
            <person name="Cadieu E."/>
            <person name="Dreano S."/>
            <person name="Gloux S."/>
            <person name="Lelaure V."/>
            <person name="Mottier S."/>
            <person name="Galibert F."/>
            <person name="Aves S.J."/>
            <person name="Xiang Z."/>
            <person name="Hunt C."/>
            <person name="Moore K."/>
            <person name="Hurst S.M."/>
            <person name="Lucas M."/>
            <person name="Rochet M."/>
            <person name="Gaillardin C."/>
            <person name="Tallada V.A."/>
            <person name="Garzon A."/>
            <person name="Thode G."/>
            <person name="Daga R.R."/>
            <person name="Cruzado L."/>
            <person name="Jimenez J."/>
            <person name="Sanchez M."/>
            <person name="del Rey F."/>
            <person name="Benito J."/>
            <person name="Dominguez A."/>
            <person name="Revuelta J.L."/>
            <person name="Moreno S."/>
            <person name="Armstrong J."/>
            <person name="Forsburg S.L."/>
            <person name="Cerutti L."/>
            <person name="Lowe T."/>
            <person name="McCombie W.R."/>
            <person name="Paulsen I."/>
            <person name="Potashkin J."/>
            <person name="Shpakovski G.V."/>
            <person name="Ussery D."/>
            <person name="Barrell B.G."/>
            <person name="Nurse P."/>
        </authorList>
    </citation>
    <scope>NUCLEOTIDE SEQUENCE [LARGE SCALE GENOMIC DNA]</scope>
    <source>
        <strain>972 / ATCC 24843</strain>
    </source>
</reference>
<reference evidence="3" key="2">
    <citation type="journal article" date="2006" name="Nat. Biotechnol.">
        <title>ORFeome cloning and global analysis of protein localization in the fission yeast Schizosaccharomyces pombe.</title>
        <authorList>
            <person name="Matsuyama A."/>
            <person name="Arai R."/>
            <person name="Yashiroda Y."/>
            <person name="Shirai A."/>
            <person name="Kamata A."/>
            <person name="Sekido S."/>
            <person name="Kobayashi Y."/>
            <person name="Hashimoto A."/>
            <person name="Hamamoto M."/>
            <person name="Hiraoka Y."/>
            <person name="Horinouchi S."/>
            <person name="Yoshida M."/>
        </authorList>
    </citation>
    <scope>SUBCELLULAR LOCATION [LARGE SCALE ANALYSIS]</scope>
</reference>